<feature type="chain" id="PRO_0000106029" description="Membrane protein">
    <location>
        <begin position="1"/>
        <end position="230"/>
    </location>
</feature>
<feature type="topological domain" description="Virion surface" evidence="1">
    <location>
        <begin position="1"/>
        <end position="24"/>
    </location>
</feature>
<feature type="transmembrane region" description="Helical" evidence="1">
    <location>
        <begin position="25"/>
        <end position="45"/>
    </location>
</feature>
<feature type="topological domain" description="Intravirion" evidence="1">
    <location>
        <begin position="46"/>
        <end position="55"/>
    </location>
</feature>
<feature type="transmembrane region" description="Helical" evidence="1">
    <location>
        <begin position="56"/>
        <end position="76"/>
    </location>
</feature>
<feature type="topological domain" description="Virion surface" evidence="1">
    <location>
        <begin position="77"/>
        <end position="84"/>
    </location>
</feature>
<feature type="transmembrane region" description="Helical" evidence="1">
    <location>
        <begin position="85"/>
        <end position="105"/>
    </location>
</feature>
<feature type="topological domain" description="Intravirion" evidence="1">
    <location>
        <begin position="106"/>
        <end position="228"/>
    </location>
</feature>
<protein>
    <recommendedName>
        <fullName evidence="1">Membrane protein</fullName>
        <shortName evidence="1">M protein</shortName>
    </recommendedName>
    <alternativeName>
        <fullName evidence="1">E1 glycoprotein</fullName>
    </alternativeName>
    <alternativeName>
        <fullName evidence="1">Matrix glycoprotein</fullName>
    </alternativeName>
    <alternativeName>
        <fullName evidence="1">Membrane glycoprotein</fullName>
    </alternativeName>
</protein>
<accession>P69703</accession>
<accession>P10526</accession>
<accession>P36359</accession>
<gene>
    <name evidence="1" type="primary">M</name>
    <name type="ORF">6</name>
</gene>
<reference key="1">
    <citation type="journal article" date="1990" name="Res. Virol.">
        <title>Sequence and analysis of BECV F15 matrix protein.</title>
        <authorList>
            <person name="Savoysky E."/>
            <person name="Boireau P."/>
            <person name="Finance C."/>
            <person name="Laporte J."/>
        </authorList>
    </citation>
    <scope>NUCLEOTIDE SEQUENCE</scope>
</reference>
<comment type="function">
    <text evidence="1 2">Component of the viral envelope that plays a central role in virus morphogenesis and assembly via its interactions with other viral proteins.</text>
</comment>
<comment type="subunit">
    <text evidence="1 2">Homomultimer. Interacts with envelope E protein in the budding compartment of the host cell, which is located between endoplasmic reticulum and the Golgi complex. Forms a complex with HE and S proteins. Interacts with nucleocapsid N protein. This interaction probably participates in RNA packaging into the virus.</text>
</comment>
<comment type="subcellular location">
    <subcellularLocation>
        <location evidence="1">Virion membrane</location>
        <topology evidence="1">Multi-pass membrane protein</topology>
    </subcellularLocation>
    <subcellularLocation>
        <location evidence="1">Host Golgi apparatus membrane</location>
        <topology evidence="1">Multi-pass membrane protein</topology>
    </subcellularLocation>
    <text evidence="1">Largely embedded in the lipid bilayer.</text>
</comment>
<comment type="similarity">
    <text evidence="1">Belongs to the betacoronaviruses M protein family.</text>
</comment>
<evidence type="ECO:0000255" key="1">
    <source>
        <dbReference type="HAMAP-Rule" id="MF_04202"/>
    </source>
</evidence>
<evidence type="ECO:0000255" key="2">
    <source>
        <dbReference type="PROSITE-ProRule" id="PRU01275"/>
    </source>
</evidence>
<sequence length="230" mass="26372">MSSVTTPAPVYTWTADEAIKFLKEWNFSLGIILLFITIILQFGYTSRSMFVYVIKMIILWLMWPLTIILTIFNCVYALNNVYLGFSIVFTIVAIIMWIVYFVNSIRLFIRTGSWWSFNPETNNLMCIDMKGRMYVRPIIEDYHTLTVTIIRGHLYMQGIKLGTGYSLSDLPAYVTVAKVSHLLTYKRGFLDKIGDTSGFAVYVKSKVGNYRLPSTQKGSGMDTALLRNNI</sequence>
<name>VME1_CVBF</name>
<organismHost>
    <name type="scientific">Bos taurus</name>
    <name type="common">Bovine</name>
    <dbReference type="NCBI Taxonomy" id="9913"/>
</organismHost>
<proteinExistence type="inferred from homology"/>
<organism>
    <name type="scientific">Bovine coronavirus (strain F15)</name>
    <name type="common">BCoV</name>
    <name type="synonym">BCV</name>
    <dbReference type="NCBI Taxonomy" id="11129"/>
    <lineage>
        <taxon>Viruses</taxon>
        <taxon>Riboviria</taxon>
        <taxon>Orthornavirae</taxon>
        <taxon>Pisuviricota</taxon>
        <taxon>Pisoniviricetes</taxon>
        <taxon>Nidovirales</taxon>
        <taxon>Cornidovirineae</taxon>
        <taxon>Coronaviridae</taxon>
        <taxon>Orthocoronavirinae</taxon>
        <taxon>Betacoronavirus</taxon>
        <taxon>Embecovirus</taxon>
        <taxon>Betacoronavirus 1</taxon>
    </lineage>
</organism>
<dbReference type="PIR" id="A26347">
    <property type="entry name" value="VGIHBC"/>
</dbReference>
<dbReference type="SMR" id="P69703"/>
<dbReference type="GO" id="GO:0044178">
    <property type="term" value="C:host cell Golgi membrane"/>
    <property type="evidence" value="ECO:0007669"/>
    <property type="project" value="UniProtKB-SubCell"/>
</dbReference>
<dbReference type="GO" id="GO:0016020">
    <property type="term" value="C:membrane"/>
    <property type="evidence" value="ECO:0007669"/>
    <property type="project" value="UniProtKB-UniRule"/>
</dbReference>
<dbReference type="GO" id="GO:0019031">
    <property type="term" value="C:viral envelope"/>
    <property type="evidence" value="ECO:0007669"/>
    <property type="project" value="UniProtKB-UniRule"/>
</dbReference>
<dbReference type="GO" id="GO:0055036">
    <property type="term" value="C:virion membrane"/>
    <property type="evidence" value="ECO:0007669"/>
    <property type="project" value="UniProtKB-SubCell"/>
</dbReference>
<dbReference type="GO" id="GO:0039660">
    <property type="term" value="F:structural constituent of virion"/>
    <property type="evidence" value="ECO:0007669"/>
    <property type="project" value="UniProtKB-UniRule"/>
</dbReference>
<dbReference type="CDD" id="cd21568">
    <property type="entry name" value="HCoV-like_M"/>
    <property type="match status" value="1"/>
</dbReference>
<dbReference type="HAMAP" id="MF_04202">
    <property type="entry name" value="BETA_CORONA_M"/>
    <property type="match status" value="1"/>
</dbReference>
<dbReference type="InterPro" id="IPR002574">
    <property type="entry name" value="M_CoV"/>
</dbReference>
<dbReference type="InterPro" id="IPR044362">
    <property type="entry name" value="M_HCoV-like"/>
</dbReference>
<dbReference type="Pfam" id="PF01635">
    <property type="entry name" value="CoV_M"/>
    <property type="match status" value="1"/>
</dbReference>
<dbReference type="PROSITE" id="PS51927">
    <property type="entry name" value="COV_M"/>
    <property type="match status" value="1"/>
</dbReference>
<keyword id="KW-0325">Glycoprotein</keyword>
<keyword id="KW-1040">Host Golgi apparatus</keyword>
<keyword id="KW-1043">Host membrane</keyword>
<keyword id="KW-0945">Host-virus interaction</keyword>
<keyword id="KW-0472">Membrane</keyword>
<keyword id="KW-0812">Transmembrane</keyword>
<keyword id="KW-1133">Transmembrane helix</keyword>
<keyword id="KW-0261">Viral envelope protein</keyword>
<keyword id="KW-0899">Viral immunoevasion</keyword>
<keyword id="KW-0468">Viral matrix protein</keyword>
<keyword id="KW-0946">Virion</keyword>